<name>RS20_STAA2</name>
<reference key="1">
    <citation type="submission" date="2007-06" db="EMBL/GenBank/DDBJ databases">
        <title>Complete sequence of chromosome of Staphylococcus aureus subsp. aureus JH1.</title>
        <authorList>
            <consortium name="US DOE Joint Genome Institute"/>
            <person name="Copeland A."/>
            <person name="Lucas S."/>
            <person name="Lapidus A."/>
            <person name="Barry K."/>
            <person name="Detter J.C."/>
            <person name="Glavina del Rio T."/>
            <person name="Hammon N."/>
            <person name="Israni S."/>
            <person name="Dalin E."/>
            <person name="Tice H."/>
            <person name="Pitluck S."/>
            <person name="Chain P."/>
            <person name="Malfatti S."/>
            <person name="Shin M."/>
            <person name="Vergez L."/>
            <person name="Schmutz J."/>
            <person name="Larimer F."/>
            <person name="Land M."/>
            <person name="Hauser L."/>
            <person name="Kyrpides N."/>
            <person name="Ivanova N."/>
            <person name="Tomasz A."/>
            <person name="Richardson P."/>
        </authorList>
    </citation>
    <scope>NUCLEOTIDE SEQUENCE [LARGE SCALE GENOMIC DNA]</scope>
    <source>
        <strain>JH1</strain>
    </source>
</reference>
<dbReference type="EMBL" id="CP000736">
    <property type="protein sequence ID" value="ABR52526.1"/>
    <property type="molecule type" value="Genomic_DNA"/>
</dbReference>
<dbReference type="SMR" id="A6U258"/>
<dbReference type="KEGG" id="sah:SaurJH1_1678"/>
<dbReference type="HOGENOM" id="CLU_160655_1_1_9"/>
<dbReference type="GO" id="GO:0005829">
    <property type="term" value="C:cytosol"/>
    <property type="evidence" value="ECO:0007669"/>
    <property type="project" value="TreeGrafter"/>
</dbReference>
<dbReference type="GO" id="GO:0015935">
    <property type="term" value="C:small ribosomal subunit"/>
    <property type="evidence" value="ECO:0007669"/>
    <property type="project" value="TreeGrafter"/>
</dbReference>
<dbReference type="GO" id="GO:0070181">
    <property type="term" value="F:small ribosomal subunit rRNA binding"/>
    <property type="evidence" value="ECO:0007669"/>
    <property type="project" value="TreeGrafter"/>
</dbReference>
<dbReference type="GO" id="GO:0003735">
    <property type="term" value="F:structural constituent of ribosome"/>
    <property type="evidence" value="ECO:0007669"/>
    <property type="project" value="InterPro"/>
</dbReference>
<dbReference type="GO" id="GO:0006412">
    <property type="term" value="P:translation"/>
    <property type="evidence" value="ECO:0007669"/>
    <property type="project" value="UniProtKB-UniRule"/>
</dbReference>
<dbReference type="Gene3D" id="1.20.58.110">
    <property type="entry name" value="Ribosomal protein S20"/>
    <property type="match status" value="1"/>
</dbReference>
<dbReference type="HAMAP" id="MF_00500">
    <property type="entry name" value="Ribosomal_bS20"/>
    <property type="match status" value="1"/>
</dbReference>
<dbReference type="InterPro" id="IPR002583">
    <property type="entry name" value="Ribosomal_bS20"/>
</dbReference>
<dbReference type="InterPro" id="IPR036510">
    <property type="entry name" value="Ribosomal_bS20_sf"/>
</dbReference>
<dbReference type="NCBIfam" id="TIGR00029">
    <property type="entry name" value="S20"/>
    <property type="match status" value="1"/>
</dbReference>
<dbReference type="PANTHER" id="PTHR33398">
    <property type="entry name" value="30S RIBOSOMAL PROTEIN S20"/>
    <property type="match status" value="1"/>
</dbReference>
<dbReference type="PANTHER" id="PTHR33398:SF1">
    <property type="entry name" value="SMALL RIBOSOMAL SUBUNIT PROTEIN BS20C"/>
    <property type="match status" value="1"/>
</dbReference>
<dbReference type="Pfam" id="PF01649">
    <property type="entry name" value="Ribosomal_S20p"/>
    <property type="match status" value="1"/>
</dbReference>
<dbReference type="SUPFAM" id="SSF46992">
    <property type="entry name" value="Ribosomal protein S20"/>
    <property type="match status" value="1"/>
</dbReference>
<proteinExistence type="inferred from homology"/>
<organism>
    <name type="scientific">Staphylococcus aureus (strain JH1)</name>
    <dbReference type="NCBI Taxonomy" id="359787"/>
    <lineage>
        <taxon>Bacteria</taxon>
        <taxon>Bacillati</taxon>
        <taxon>Bacillota</taxon>
        <taxon>Bacilli</taxon>
        <taxon>Bacillales</taxon>
        <taxon>Staphylococcaceae</taxon>
        <taxon>Staphylococcus</taxon>
    </lineage>
</organism>
<keyword id="KW-0687">Ribonucleoprotein</keyword>
<keyword id="KW-0689">Ribosomal protein</keyword>
<keyword id="KW-0694">RNA-binding</keyword>
<keyword id="KW-0699">rRNA-binding</keyword>
<sequence>MANIKSAIKRVKTTEKAEARNISQKSAMRTAVKNAKTAVSNNADNKNELVSLAVKLVDKAAQSNLIHSNKADRIKSQLMTANK</sequence>
<gene>
    <name evidence="1" type="primary">rpsT</name>
    <name type="ordered locus">SaurJH1_1678</name>
</gene>
<accession>A6U258</accession>
<comment type="function">
    <text evidence="1">Binds directly to 16S ribosomal RNA.</text>
</comment>
<comment type="similarity">
    <text evidence="1">Belongs to the bacterial ribosomal protein bS20 family.</text>
</comment>
<feature type="chain" id="PRO_1000126516" description="Small ribosomal subunit protein bS20">
    <location>
        <begin position="1"/>
        <end position="83"/>
    </location>
</feature>
<evidence type="ECO:0000255" key="1">
    <source>
        <dbReference type="HAMAP-Rule" id="MF_00500"/>
    </source>
</evidence>
<evidence type="ECO:0000305" key="2"/>
<protein>
    <recommendedName>
        <fullName evidence="1">Small ribosomal subunit protein bS20</fullName>
    </recommendedName>
    <alternativeName>
        <fullName evidence="2">30S ribosomal protein S20</fullName>
    </alternativeName>
</protein>